<organism evidence="3">
    <name type="scientific">Centruroides baergi</name>
    <name type="common">Scorpion</name>
    <name type="synonym">Centruroides nigrovariatus baergi</name>
    <dbReference type="NCBI Taxonomy" id="329350"/>
    <lineage>
        <taxon>Eukaryota</taxon>
        <taxon>Metazoa</taxon>
        <taxon>Ecdysozoa</taxon>
        <taxon>Arthropoda</taxon>
        <taxon>Chelicerata</taxon>
        <taxon>Arachnida</taxon>
        <taxon>Scorpiones</taxon>
        <taxon>Buthida</taxon>
        <taxon>Buthoidea</taxon>
        <taxon>Buthidae</taxon>
        <taxon>Centruroides</taxon>
    </lineage>
</organism>
<proteinExistence type="evidence at protein level"/>
<sequence length="66" mass="7736">KEGYLVDLHTGCKYTCVGLGDNDYCVRECRLRYYDSAHGYCYAFGCWCTHLYEQAVVWPLPNKRCK</sequence>
<feature type="chain" id="PRO_0000450848" description="Beta-toxin Cb2">
    <location>
        <begin position="1"/>
        <end position="66"/>
    </location>
</feature>
<feature type="domain" description="LCN-type CS-alpha/beta" evidence="1">
    <location>
        <begin position="1"/>
        <end position="66"/>
    </location>
</feature>
<feature type="disulfide bond" evidence="1">
    <location>
        <begin position="12"/>
        <end position="65"/>
    </location>
</feature>
<feature type="disulfide bond" evidence="1">
    <location>
        <begin position="16"/>
        <end position="41"/>
    </location>
</feature>
<feature type="disulfide bond" evidence="1">
    <location>
        <begin position="25"/>
        <end position="46"/>
    </location>
</feature>
<feature type="disulfide bond" evidence="1">
    <location>
        <begin position="29"/>
        <end position="48"/>
    </location>
</feature>
<reference evidence="4" key="1">
    <citation type="journal article" date="2020" name="Toxicon">
        <title>Biochemical, electrophysiological and immunological characterization of the venom from Centruroides baergi, a new scorpion species of medical importance in Mexico.</title>
        <authorList>
            <person name="Gomez-Ramirez I.V."/>
            <person name="Riano-Umbarila L."/>
            <person name="Olamendi-Portugal T."/>
            <person name="Restano-Cassulini R."/>
            <person name="Possani L.D."/>
            <person name="Becerril B."/>
        </authorList>
    </citation>
    <scope>PROTEIN SEQUENCE</scope>
    <scope>FUNCTION</scope>
    <scope>SUBCELLULAR LOCATION</scope>
    <scope>MASS SPECTROMETRY</scope>
    <scope>TOXIC DOSE</scope>
    <source>
        <tissue evidence="3">Venom</tissue>
    </source>
</reference>
<evidence type="ECO:0000255" key="1">
    <source>
        <dbReference type="PROSITE-ProRule" id="PRU01210"/>
    </source>
</evidence>
<evidence type="ECO:0000269" key="2">
    <source>
    </source>
</evidence>
<evidence type="ECO:0000303" key="3">
    <source>
    </source>
</evidence>
<evidence type="ECO:0000305" key="4"/>
<evidence type="ECO:0000305" key="5">
    <source>
    </source>
</evidence>
<protein>
    <recommendedName>
        <fullName evidence="3">Beta-toxin Cb2</fullName>
    </recommendedName>
</protein>
<dbReference type="SMR" id="C0HLR4"/>
<dbReference type="GO" id="GO:0005615">
    <property type="term" value="C:extracellular space"/>
    <property type="evidence" value="ECO:0000314"/>
    <property type="project" value="UniProtKB"/>
</dbReference>
<dbReference type="GO" id="GO:0019871">
    <property type="term" value="F:sodium channel inhibitor activity"/>
    <property type="evidence" value="ECO:0000314"/>
    <property type="project" value="UniProtKB"/>
</dbReference>
<dbReference type="GO" id="GO:0090729">
    <property type="term" value="F:toxin activity"/>
    <property type="evidence" value="ECO:0000314"/>
    <property type="project" value="UniProtKB"/>
</dbReference>
<dbReference type="GO" id="GO:0006952">
    <property type="term" value="P:defense response"/>
    <property type="evidence" value="ECO:0000314"/>
    <property type="project" value="UniProtKB"/>
</dbReference>
<dbReference type="GO" id="GO:0044493">
    <property type="term" value="P:envenomation resulting in negative regulation of voltage-gated sodium channel activity in another organism"/>
    <property type="evidence" value="ECO:0000314"/>
    <property type="project" value="UniProtKB"/>
</dbReference>
<dbReference type="CDD" id="cd23106">
    <property type="entry name" value="neurotoxins_LC_scorpion"/>
    <property type="match status" value="1"/>
</dbReference>
<dbReference type="FunFam" id="3.30.30.10:FF:000002">
    <property type="entry name" value="Alpha-like toxin BmK-M1"/>
    <property type="match status" value="1"/>
</dbReference>
<dbReference type="Gene3D" id="3.30.30.10">
    <property type="entry name" value="Knottin, scorpion toxin-like"/>
    <property type="match status" value="1"/>
</dbReference>
<dbReference type="InterPro" id="IPR044062">
    <property type="entry name" value="LCN-type_CS_alpha_beta_dom"/>
</dbReference>
<dbReference type="InterPro" id="IPR003614">
    <property type="entry name" value="Scorpion_toxin-like"/>
</dbReference>
<dbReference type="InterPro" id="IPR036574">
    <property type="entry name" value="Scorpion_toxin-like_sf"/>
</dbReference>
<dbReference type="InterPro" id="IPR018218">
    <property type="entry name" value="Scorpion_toxinL"/>
</dbReference>
<dbReference type="PRINTS" id="PR00285">
    <property type="entry name" value="SCORPNTOXIN"/>
</dbReference>
<dbReference type="SMART" id="SM00505">
    <property type="entry name" value="Knot1"/>
    <property type="match status" value="1"/>
</dbReference>
<dbReference type="SUPFAM" id="SSF57095">
    <property type="entry name" value="Scorpion toxin-like"/>
    <property type="match status" value="1"/>
</dbReference>
<dbReference type="PROSITE" id="PS51863">
    <property type="entry name" value="LCN_CSAB"/>
    <property type="match status" value="1"/>
</dbReference>
<keyword id="KW-0903">Direct protein sequencing</keyword>
<keyword id="KW-1015">Disulfide bond</keyword>
<keyword id="KW-0872">Ion channel impairing toxin</keyword>
<keyword id="KW-0528">Neurotoxin</keyword>
<keyword id="KW-0964">Secreted</keyword>
<keyword id="KW-0800">Toxin</keyword>
<keyword id="KW-0738">Voltage-gated sodium channel impairing toxin</keyword>
<comment type="function">
    <text evidence="2">Beta toxins bind voltage-independently at site-4 of sodium channels (Nav) and reduces peak current and shifts the voltage of activation toward more negative potentials thereby affecting sodium channel activation and promoting spontaneous and repetitive firing (PubMed:32479835). Has an inhibitory effect on voltage-gated sodium channel hNav1.6/SCN8A, affecting both the activation and inactivation processes (PubMed:32479835). Also reduces the peak current of hNav1.5/SCN5A but does not shift its voltage of activation (PubMed:32479835). This toxin is active against mammals and lethal to mice (PubMed:32479835).</text>
</comment>
<comment type="subcellular location">
    <subcellularLocation>
        <location evidence="2">Secreted</location>
    </subcellularLocation>
</comment>
<comment type="tissue specificity">
    <text evidence="5">Expressed by the venom gland.</text>
</comment>
<comment type="domain">
    <text evidence="4">Has the structural arrangement of an alpha-helix connected to antiparallel beta-sheets by disulfide bonds (CS-alpha/beta).</text>
</comment>
<comment type="mass spectrometry" mass="7727.6" error="1.0" method="Electrospray" evidence="2"/>
<comment type="toxic dose">
    <text evidence="2">LD(50) is 1.5 ug/mouse by intraperitoneal injection into mice.</text>
</comment>
<comment type="similarity">
    <text evidence="4">Belongs to the long (4 C-C) scorpion toxin superfamily. Sodium channel inhibitor family. Beta subfamily.</text>
</comment>
<name>SCX2_CENBA</name>
<accession>C0HLR4</accession>